<reference key="1">
    <citation type="journal article" date="2003" name="Proc. Natl. Acad. Sci. U.S.A.">
        <title>Complete genome sequence of the Q-fever pathogen, Coxiella burnetii.</title>
        <authorList>
            <person name="Seshadri R."/>
            <person name="Paulsen I.T."/>
            <person name="Eisen J.A."/>
            <person name="Read T.D."/>
            <person name="Nelson K.E."/>
            <person name="Nelson W.C."/>
            <person name="Ward N.L."/>
            <person name="Tettelin H."/>
            <person name="Davidsen T.M."/>
            <person name="Beanan M.J."/>
            <person name="DeBoy R.T."/>
            <person name="Daugherty S.C."/>
            <person name="Brinkac L.M."/>
            <person name="Madupu R."/>
            <person name="Dodson R.J."/>
            <person name="Khouri H.M."/>
            <person name="Lee K.H."/>
            <person name="Carty H.A."/>
            <person name="Scanlan D."/>
            <person name="Heinzen R.A."/>
            <person name="Thompson H.A."/>
            <person name="Samuel J.E."/>
            <person name="Fraser C.M."/>
            <person name="Heidelberg J.F."/>
        </authorList>
    </citation>
    <scope>NUCLEOTIDE SEQUENCE [LARGE SCALE GENOMIC DNA]</scope>
    <source>
        <strain>RSA 493 / Nine Mile phase I</strain>
    </source>
</reference>
<feature type="chain" id="PRO_0000172938" description="Dephospho-CoA kinase">
    <location>
        <begin position="1"/>
        <end position="199"/>
    </location>
</feature>
<feature type="domain" description="DPCK" evidence="1">
    <location>
        <begin position="3"/>
        <end position="199"/>
    </location>
</feature>
<feature type="binding site" evidence="1">
    <location>
        <begin position="11"/>
        <end position="16"/>
    </location>
    <ligand>
        <name>ATP</name>
        <dbReference type="ChEBI" id="CHEBI:30616"/>
    </ligand>
</feature>
<protein>
    <recommendedName>
        <fullName evidence="1">Dephospho-CoA kinase</fullName>
        <ecNumber evidence="1">2.7.1.24</ecNumber>
    </recommendedName>
    <alternativeName>
        <fullName evidence="1">Dephosphocoenzyme A kinase</fullName>
    </alternativeName>
</protein>
<name>COAE_COXBU</name>
<accession>Q83F01</accession>
<dbReference type="EC" id="2.7.1.24" evidence="1"/>
<dbReference type="EMBL" id="AE016828">
    <property type="protein sequence ID" value="AAO89716.1"/>
    <property type="molecule type" value="Genomic_DNA"/>
</dbReference>
<dbReference type="RefSeq" id="NP_819202.1">
    <property type="nucleotide sequence ID" value="NC_002971.4"/>
</dbReference>
<dbReference type="RefSeq" id="WP_005772796.1">
    <property type="nucleotide sequence ID" value="NZ_CCYB01000063.1"/>
</dbReference>
<dbReference type="SMR" id="Q83F01"/>
<dbReference type="STRING" id="227377.CBU_0152"/>
<dbReference type="EnsemblBacteria" id="AAO89716">
    <property type="protein sequence ID" value="AAO89716"/>
    <property type="gene ID" value="CBU_0152"/>
</dbReference>
<dbReference type="GeneID" id="1208023"/>
<dbReference type="KEGG" id="cbu:CBU_0152"/>
<dbReference type="PATRIC" id="fig|227377.7.peg.153"/>
<dbReference type="eggNOG" id="COG0237">
    <property type="taxonomic scope" value="Bacteria"/>
</dbReference>
<dbReference type="HOGENOM" id="CLU_057180_1_2_6"/>
<dbReference type="OrthoDB" id="9812943at2"/>
<dbReference type="UniPathway" id="UPA00241">
    <property type="reaction ID" value="UER00356"/>
</dbReference>
<dbReference type="Proteomes" id="UP000002671">
    <property type="component" value="Chromosome"/>
</dbReference>
<dbReference type="GO" id="GO:0005737">
    <property type="term" value="C:cytoplasm"/>
    <property type="evidence" value="ECO:0007669"/>
    <property type="project" value="UniProtKB-SubCell"/>
</dbReference>
<dbReference type="GO" id="GO:0005524">
    <property type="term" value="F:ATP binding"/>
    <property type="evidence" value="ECO:0007669"/>
    <property type="project" value="UniProtKB-UniRule"/>
</dbReference>
<dbReference type="GO" id="GO:0004140">
    <property type="term" value="F:dephospho-CoA kinase activity"/>
    <property type="evidence" value="ECO:0000318"/>
    <property type="project" value="GO_Central"/>
</dbReference>
<dbReference type="GO" id="GO:0015937">
    <property type="term" value="P:coenzyme A biosynthetic process"/>
    <property type="evidence" value="ECO:0000318"/>
    <property type="project" value="GO_Central"/>
</dbReference>
<dbReference type="CDD" id="cd02022">
    <property type="entry name" value="DPCK"/>
    <property type="match status" value="1"/>
</dbReference>
<dbReference type="FunFam" id="3.40.50.300:FF:000518">
    <property type="entry name" value="Dephospho-CoA kinase"/>
    <property type="match status" value="1"/>
</dbReference>
<dbReference type="Gene3D" id="3.40.50.300">
    <property type="entry name" value="P-loop containing nucleotide triphosphate hydrolases"/>
    <property type="match status" value="1"/>
</dbReference>
<dbReference type="HAMAP" id="MF_00376">
    <property type="entry name" value="Dephospho_CoA_kinase"/>
    <property type="match status" value="1"/>
</dbReference>
<dbReference type="InterPro" id="IPR001977">
    <property type="entry name" value="Depp_CoAkinase"/>
</dbReference>
<dbReference type="InterPro" id="IPR027417">
    <property type="entry name" value="P-loop_NTPase"/>
</dbReference>
<dbReference type="NCBIfam" id="TIGR00152">
    <property type="entry name" value="dephospho-CoA kinase"/>
    <property type="match status" value="1"/>
</dbReference>
<dbReference type="PANTHER" id="PTHR10695:SF46">
    <property type="entry name" value="BIFUNCTIONAL COENZYME A SYNTHASE-RELATED"/>
    <property type="match status" value="1"/>
</dbReference>
<dbReference type="PANTHER" id="PTHR10695">
    <property type="entry name" value="DEPHOSPHO-COA KINASE-RELATED"/>
    <property type="match status" value="1"/>
</dbReference>
<dbReference type="Pfam" id="PF01121">
    <property type="entry name" value="CoaE"/>
    <property type="match status" value="1"/>
</dbReference>
<dbReference type="SUPFAM" id="SSF52540">
    <property type="entry name" value="P-loop containing nucleoside triphosphate hydrolases"/>
    <property type="match status" value="1"/>
</dbReference>
<dbReference type="PROSITE" id="PS51219">
    <property type="entry name" value="DPCK"/>
    <property type="match status" value="1"/>
</dbReference>
<comment type="function">
    <text evidence="1">Catalyzes the phosphorylation of the 3'-hydroxyl group of dephosphocoenzyme A to form coenzyme A.</text>
</comment>
<comment type="catalytic activity">
    <reaction evidence="1">
        <text>3'-dephospho-CoA + ATP = ADP + CoA + H(+)</text>
        <dbReference type="Rhea" id="RHEA:18245"/>
        <dbReference type="ChEBI" id="CHEBI:15378"/>
        <dbReference type="ChEBI" id="CHEBI:30616"/>
        <dbReference type="ChEBI" id="CHEBI:57287"/>
        <dbReference type="ChEBI" id="CHEBI:57328"/>
        <dbReference type="ChEBI" id="CHEBI:456216"/>
        <dbReference type="EC" id="2.7.1.24"/>
    </reaction>
</comment>
<comment type="pathway">
    <text evidence="1">Cofactor biosynthesis; coenzyme A biosynthesis; CoA from (R)-pantothenate: step 5/5.</text>
</comment>
<comment type="subcellular location">
    <subcellularLocation>
        <location evidence="1">Cytoplasm</location>
    </subcellularLocation>
</comment>
<comment type="similarity">
    <text evidence="1">Belongs to the CoaE family.</text>
</comment>
<gene>
    <name evidence="1" type="primary">coaE</name>
    <name type="ordered locus">CBU_0152</name>
</gene>
<organism>
    <name type="scientific">Coxiella burnetii (strain RSA 493 / Nine Mile phase I)</name>
    <dbReference type="NCBI Taxonomy" id="227377"/>
    <lineage>
        <taxon>Bacteria</taxon>
        <taxon>Pseudomonadati</taxon>
        <taxon>Pseudomonadota</taxon>
        <taxon>Gammaproteobacteria</taxon>
        <taxon>Legionellales</taxon>
        <taxon>Coxiellaceae</taxon>
        <taxon>Coxiella</taxon>
    </lineage>
</organism>
<evidence type="ECO:0000255" key="1">
    <source>
        <dbReference type="HAMAP-Rule" id="MF_00376"/>
    </source>
</evidence>
<proteinExistence type="inferred from homology"/>
<sequence>MLRIGLTGGIGSGKSTVANYFAELGAPVIDADQIAHEITKPDQAAFKQIINHFGNAVLTKGKFLNRTKLRELIFENPDDRQWLENLLHPLIIAKMKTQLKKIKAPYCILAIPLLAEASQSVDFIDRILVVDAPETLQIQRTKSRDQLSDQQIQLILQSQSPREKRLAIADDVIVNDQTIPILRKAVFQLHCKYLQIAQT</sequence>
<keyword id="KW-0067">ATP-binding</keyword>
<keyword id="KW-0173">Coenzyme A biosynthesis</keyword>
<keyword id="KW-0963">Cytoplasm</keyword>
<keyword id="KW-0418">Kinase</keyword>
<keyword id="KW-0547">Nucleotide-binding</keyword>
<keyword id="KW-1185">Reference proteome</keyword>
<keyword id="KW-0808">Transferase</keyword>